<gene>
    <name evidence="1" type="primary">rpoC</name>
    <name type="ordered locus">Cthe_2725</name>
</gene>
<accession>A3DIZ5</accession>
<proteinExistence type="evidence at protein level"/>
<dbReference type="EC" id="2.7.7.6" evidence="1"/>
<dbReference type="EMBL" id="CP000568">
    <property type="protein sequence ID" value="ABN53924.1"/>
    <property type="molecule type" value="Genomic_DNA"/>
</dbReference>
<dbReference type="RefSeq" id="WP_020457901.1">
    <property type="nucleotide sequence ID" value="NC_009012.1"/>
</dbReference>
<dbReference type="PDB" id="8I23">
    <property type="method" value="EM"/>
    <property type="resolution" value="3.03 A"/>
    <property type="chains" value="D=2-1165"/>
</dbReference>
<dbReference type="PDB" id="8I24">
    <property type="method" value="EM"/>
    <property type="resolution" value="3.36 A"/>
    <property type="chains" value="D=2-1165"/>
</dbReference>
<dbReference type="PDBsum" id="8I23"/>
<dbReference type="PDBsum" id="8I24"/>
<dbReference type="SMR" id="A3DIZ5"/>
<dbReference type="STRING" id="203119.Cthe_2725"/>
<dbReference type="GeneID" id="35803586"/>
<dbReference type="KEGG" id="cth:Cthe_2725"/>
<dbReference type="eggNOG" id="COG0086">
    <property type="taxonomic scope" value="Bacteria"/>
</dbReference>
<dbReference type="HOGENOM" id="CLU_000524_3_1_9"/>
<dbReference type="OrthoDB" id="9815296at2"/>
<dbReference type="Proteomes" id="UP000002145">
    <property type="component" value="Chromosome"/>
</dbReference>
<dbReference type="GO" id="GO:0000428">
    <property type="term" value="C:DNA-directed RNA polymerase complex"/>
    <property type="evidence" value="ECO:0007669"/>
    <property type="project" value="UniProtKB-KW"/>
</dbReference>
<dbReference type="GO" id="GO:0003677">
    <property type="term" value="F:DNA binding"/>
    <property type="evidence" value="ECO:0007669"/>
    <property type="project" value="UniProtKB-UniRule"/>
</dbReference>
<dbReference type="GO" id="GO:0003899">
    <property type="term" value="F:DNA-directed RNA polymerase activity"/>
    <property type="evidence" value="ECO:0007669"/>
    <property type="project" value="UniProtKB-UniRule"/>
</dbReference>
<dbReference type="GO" id="GO:0000287">
    <property type="term" value="F:magnesium ion binding"/>
    <property type="evidence" value="ECO:0007669"/>
    <property type="project" value="UniProtKB-UniRule"/>
</dbReference>
<dbReference type="GO" id="GO:0008270">
    <property type="term" value="F:zinc ion binding"/>
    <property type="evidence" value="ECO:0007669"/>
    <property type="project" value="UniProtKB-UniRule"/>
</dbReference>
<dbReference type="GO" id="GO:0006351">
    <property type="term" value="P:DNA-templated transcription"/>
    <property type="evidence" value="ECO:0007669"/>
    <property type="project" value="UniProtKB-UniRule"/>
</dbReference>
<dbReference type="CDD" id="cd02655">
    <property type="entry name" value="RNAP_beta'_C"/>
    <property type="match status" value="1"/>
</dbReference>
<dbReference type="CDD" id="cd01609">
    <property type="entry name" value="RNAP_beta'_N"/>
    <property type="match status" value="1"/>
</dbReference>
<dbReference type="FunFam" id="1.10.150.390:FF:000002">
    <property type="entry name" value="DNA-directed RNA polymerase subunit beta"/>
    <property type="match status" value="1"/>
</dbReference>
<dbReference type="FunFam" id="1.10.40.90:FF:000001">
    <property type="entry name" value="DNA-directed RNA polymerase subunit beta"/>
    <property type="match status" value="1"/>
</dbReference>
<dbReference type="FunFam" id="4.10.860.120:FF:000001">
    <property type="entry name" value="DNA-directed RNA polymerase subunit beta"/>
    <property type="match status" value="1"/>
</dbReference>
<dbReference type="Gene3D" id="1.10.132.30">
    <property type="match status" value="1"/>
</dbReference>
<dbReference type="Gene3D" id="1.10.150.390">
    <property type="match status" value="1"/>
</dbReference>
<dbReference type="Gene3D" id="1.10.1790.20">
    <property type="match status" value="1"/>
</dbReference>
<dbReference type="Gene3D" id="1.10.40.90">
    <property type="match status" value="1"/>
</dbReference>
<dbReference type="Gene3D" id="2.40.40.20">
    <property type="match status" value="1"/>
</dbReference>
<dbReference type="Gene3D" id="2.40.50.100">
    <property type="match status" value="1"/>
</dbReference>
<dbReference type="Gene3D" id="4.10.860.120">
    <property type="entry name" value="RNA polymerase II, clamp domain"/>
    <property type="match status" value="1"/>
</dbReference>
<dbReference type="Gene3D" id="1.10.274.100">
    <property type="entry name" value="RNA polymerase Rpb1, domain 3"/>
    <property type="match status" value="2"/>
</dbReference>
<dbReference type="HAMAP" id="MF_01322">
    <property type="entry name" value="RNApol_bact_RpoC"/>
    <property type="match status" value="1"/>
</dbReference>
<dbReference type="InterPro" id="IPR045867">
    <property type="entry name" value="DNA-dir_RpoC_beta_prime"/>
</dbReference>
<dbReference type="InterPro" id="IPR012754">
    <property type="entry name" value="DNA-dir_RpoC_beta_prime_bact"/>
</dbReference>
<dbReference type="InterPro" id="IPR000722">
    <property type="entry name" value="RNA_pol_asu"/>
</dbReference>
<dbReference type="InterPro" id="IPR006592">
    <property type="entry name" value="RNA_pol_N"/>
</dbReference>
<dbReference type="InterPro" id="IPR007080">
    <property type="entry name" value="RNA_pol_Rpb1_1"/>
</dbReference>
<dbReference type="InterPro" id="IPR007066">
    <property type="entry name" value="RNA_pol_Rpb1_3"/>
</dbReference>
<dbReference type="InterPro" id="IPR042102">
    <property type="entry name" value="RNA_pol_Rpb1_3_sf"/>
</dbReference>
<dbReference type="InterPro" id="IPR007083">
    <property type="entry name" value="RNA_pol_Rpb1_4"/>
</dbReference>
<dbReference type="InterPro" id="IPR007081">
    <property type="entry name" value="RNA_pol_Rpb1_5"/>
</dbReference>
<dbReference type="InterPro" id="IPR044893">
    <property type="entry name" value="RNA_pol_Rpb1_clamp_domain"/>
</dbReference>
<dbReference type="InterPro" id="IPR038120">
    <property type="entry name" value="Rpb1_funnel_sf"/>
</dbReference>
<dbReference type="NCBIfam" id="NF011498">
    <property type="entry name" value="PRK14906.1"/>
    <property type="match status" value="1"/>
</dbReference>
<dbReference type="NCBIfam" id="TIGR02386">
    <property type="entry name" value="rpoC_TIGR"/>
    <property type="match status" value="1"/>
</dbReference>
<dbReference type="PANTHER" id="PTHR19376">
    <property type="entry name" value="DNA-DIRECTED RNA POLYMERASE"/>
    <property type="match status" value="1"/>
</dbReference>
<dbReference type="PANTHER" id="PTHR19376:SF54">
    <property type="entry name" value="DNA-DIRECTED RNA POLYMERASE SUBUNIT BETA"/>
    <property type="match status" value="1"/>
</dbReference>
<dbReference type="Pfam" id="PF04997">
    <property type="entry name" value="RNA_pol_Rpb1_1"/>
    <property type="match status" value="1"/>
</dbReference>
<dbReference type="Pfam" id="PF00623">
    <property type="entry name" value="RNA_pol_Rpb1_2"/>
    <property type="match status" value="1"/>
</dbReference>
<dbReference type="Pfam" id="PF04983">
    <property type="entry name" value="RNA_pol_Rpb1_3"/>
    <property type="match status" value="1"/>
</dbReference>
<dbReference type="Pfam" id="PF05000">
    <property type="entry name" value="RNA_pol_Rpb1_4"/>
    <property type="match status" value="1"/>
</dbReference>
<dbReference type="Pfam" id="PF04998">
    <property type="entry name" value="RNA_pol_Rpb1_5"/>
    <property type="match status" value="1"/>
</dbReference>
<dbReference type="SMART" id="SM00663">
    <property type="entry name" value="RPOLA_N"/>
    <property type="match status" value="1"/>
</dbReference>
<dbReference type="SUPFAM" id="SSF64484">
    <property type="entry name" value="beta and beta-prime subunits of DNA dependent RNA-polymerase"/>
    <property type="match status" value="1"/>
</dbReference>
<protein>
    <recommendedName>
        <fullName evidence="1">DNA-directed RNA polymerase subunit beta'</fullName>
        <shortName evidence="1">RNAP subunit beta'</shortName>
        <ecNumber evidence="1">2.7.7.6</ecNumber>
    </recommendedName>
    <alternativeName>
        <fullName evidence="1">RNA polymerase subunit beta'</fullName>
    </alternativeName>
    <alternativeName>
        <fullName evidence="1">Transcriptase subunit beta'</fullName>
    </alternativeName>
</protein>
<reference key="1">
    <citation type="submission" date="2007-02" db="EMBL/GenBank/DDBJ databases">
        <title>Complete sequence of Clostridium thermocellum ATCC 27405.</title>
        <authorList>
            <consortium name="US DOE Joint Genome Institute"/>
            <person name="Copeland A."/>
            <person name="Lucas S."/>
            <person name="Lapidus A."/>
            <person name="Barry K."/>
            <person name="Detter J.C."/>
            <person name="Glavina del Rio T."/>
            <person name="Hammon N."/>
            <person name="Israni S."/>
            <person name="Dalin E."/>
            <person name="Tice H."/>
            <person name="Pitluck S."/>
            <person name="Chertkov O."/>
            <person name="Brettin T."/>
            <person name="Bruce D."/>
            <person name="Han C."/>
            <person name="Tapia R."/>
            <person name="Gilna P."/>
            <person name="Schmutz J."/>
            <person name="Larimer F."/>
            <person name="Land M."/>
            <person name="Hauser L."/>
            <person name="Kyrpides N."/>
            <person name="Mikhailova N."/>
            <person name="Wu J.H.D."/>
            <person name="Newcomb M."/>
            <person name="Richardson P."/>
        </authorList>
    </citation>
    <scope>NUCLEOTIDE SEQUENCE [LARGE SCALE GENOMIC DNA]</scope>
    <source>
        <strain>ATCC 27405 / DSM 1237 / JCM 9322 / NBRC 103400 / NCIMB 10682 / NRRL B-4536 / VPI 7372</strain>
    </source>
</reference>
<sequence>MFELNNFDSIRIGLASPEKIREWSRGEVKKPETINYRTLKPERDGLFCERIFGPQKDWECHCGKYKRIRYKGIVCDRCGVEVTRSKVRRERMGHIELAAPVSHIWYFKGIPSRMGLLLDMSPRALEKILYFAAYVVIDPGQTPLSKKQILSEKEYRDSLEKFGPKFRAGMGAEAVRELLQEINLDELSAELREEIKQSTGQKRVRAIKRLEVVEAFRQSQNKPEWMILDVIPVIPPELRPMVQLDGGRFATSDLNDLYRRVINRNNRLKRLLDLGAPDIIVRNEKRMLQEAVDALIDNGRRGRPVTGPGNRPLKSLSDMLKGKQGRFRQNLLGKRVDYSGRSVIVVGPELKIYQCGLPKEMALELFKPFVMKKLVNDGLAHNIKSAKRMVERVRNEVWDVLEEVIKEHPVLLNRAPTLHRLGIQAFEPVLVEGRALKLHPLVCTAYNADFDGDQMAVHVPLSAEAQAEARFLMLSANNLLKPQDGKPVAVPTQDMVLGSYYLTILKEGAKGEGRVFTSMDEAVMAYDNGEIELHSKIKVRMKRVVDGVEKSKIIETTLGRLIFNEAIPQDLGFVDRSDPDKIFDLEVDFLVGKNELKKIIDKSIKVHGTTKTAILLDKIKELGFKYSTKGAITISISDMVIPEVKAKYIKETEEKIEKITKQYKRGLISDEERYNSVIAAWTEASENITRALINNLDRFNPVYMMSQSGARGNINQIKQLAGMRGLMADTSGKTIEFPIKANFREGLTVMEFFISTHGARKGLADTALRTADSGYLTRRLVDVSQDVIVRETDCGTRKGIEVTDIKDGNEVIEELSERIIGRYPVGNIVHPETGEIIVEAGRMITDQDAEKIVKAGIKKVRIRSVLTCHSEYGVCAKCYGANLATGEECNVGEAVGIIAAQSIGEPGTQLTMRTFHTGGVAGEDITQGLPRVEELFEARKPKGLAIISEIKGTVKISETKKKREIVVTSEDGETRSYLIPYGSRIKVSDGDQVEAGDELTEGSVNPHDILKIKGVEAVQTYLVHEVQKVYRMQGVDINDKHIEVIVRQMLRKVKVEDPGDTSLLPGGLVDVFDFEEENAKAIAEGKKPAVAKRALLGITKAALATDSFLSAASFQETTRVLTEAAIKGKVDPLVGLKENVIIGKLIPAGTGMSRYKDITISTVTE</sequence>
<name>RPOC_ACET2</name>
<organism>
    <name type="scientific">Acetivibrio thermocellus (strain ATCC 27405 / DSM 1237 / JCM 9322 / NBRC 103400 / NCIMB 10682 / NRRL B-4536 / VPI 7372)</name>
    <name type="common">Clostridium thermocellum</name>
    <dbReference type="NCBI Taxonomy" id="203119"/>
    <lineage>
        <taxon>Bacteria</taxon>
        <taxon>Bacillati</taxon>
        <taxon>Bacillota</taxon>
        <taxon>Clostridia</taxon>
        <taxon>Eubacteriales</taxon>
        <taxon>Oscillospiraceae</taxon>
        <taxon>Acetivibrio</taxon>
    </lineage>
</organism>
<evidence type="ECO:0000255" key="1">
    <source>
        <dbReference type="HAMAP-Rule" id="MF_01322"/>
    </source>
</evidence>
<evidence type="ECO:0007829" key="2">
    <source>
        <dbReference type="PDB" id="8I23"/>
    </source>
</evidence>
<evidence type="ECO:0007829" key="3">
    <source>
        <dbReference type="PDB" id="8I24"/>
    </source>
</evidence>
<keyword id="KW-0002">3D-structure</keyword>
<keyword id="KW-0240">DNA-directed RNA polymerase</keyword>
<keyword id="KW-0460">Magnesium</keyword>
<keyword id="KW-0479">Metal-binding</keyword>
<keyword id="KW-0548">Nucleotidyltransferase</keyword>
<keyword id="KW-1185">Reference proteome</keyword>
<keyword id="KW-0804">Transcription</keyword>
<keyword id="KW-0808">Transferase</keyword>
<keyword id="KW-0862">Zinc</keyword>
<comment type="function">
    <text evidence="1">DNA-dependent RNA polymerase catalyzes the transcription of DNA into RNA using the four ribonucleoside triphosphates as substrates.</text>
</comment>
<comment type="catalytic activity">
    <reaction evidence="1">
        <text>RNA(n) + a ribonucleoside 5'-triphosphate = RNA(n+1) + diphosphate</text>
        <dbReference type="Rhea" id="RHEA:21248"/>
        <dbReference type="Rhea" id="RHEA-COMP:14527"/>
        <dbReference type="Rhea" id="RHEA-COMP:17342"/>
        <dbReference type="ChEBI" id="CHEBI:33019"/>
        <dbReference type="ChEBI" id="CHEBI:61557"/>
        <dbReference type="ChEBI" id="CHEBI:140395"/>
        <dbReference type="EC" id="2.7.7.6"/>
    </reaction>
</comment>
<comment type="cofactor">
    <cofactor evidence="1">
        <name>Mg(2+)</name>
        <dbReference type="ChEBI" id="CHEBI:18420"/>
    </cofactor>
    <text evidence="1">Binds 1 Mg(2+) ion per subunit.</text>
</comment>
<comment type="cofactor">
    <cofactor evidence="1">
        <name>Zn(2+)</name>
        <dbReference type="ChEBI" id="CHEBI:29105"/>
    </cofactor>
    <text evidence="1">Binds 2 Zn(2+) ions per subunit.</text>
</comment>
<comment type="subunit">
    <text evidence="1">The RNAP catalytic core consists of 2 alpha, 1 beta, 1 beta' and 1 omega subunit. When a sigma factor is associated with the core the holoenzyme is formed, which can initiate transcription.</text>
</comment>
<comment type="similarity">
    <text evidence="1">Belongs to the RNA polymerase beta' chain family.</text>
</comment>
<feature type="chain" id="PRO_0000353340" description="DNA-directed RNA polymerase subunit beta'">
    <location>
        <begin position="1"/>
        <end position="1165"/>
    </location>
</feature>
<feature type="binding site" evidence="1">
    <location>
        <position position="60"/>
    </location>
    <ligand>
        <name>Zn(2+)</name>
        <dbReference type="ChEBI" id="CHEBI:29105"/>
        <label>1</label>
    </ligand>
</feature>
<feature type="binding site" evidence="1">
    <location>
        <position position="62"/>
    </location>
    <ligand>
        <name>Zn(2+)</name>
        <dbReference type="ChEBI" id="CHEBI:29105"/>
        <label>1</label>
    </ligand>
</feature>
<feature type="binding site" evidence="1">
    <location>
        <position position="75"/>
    </location>
    <ligand>
        <name>Zn(2+)</name>
        <dbReference type="ChEBI" id="CHEBI:29105"/>
        <label>1</label>
    </ligand>
</feature>
<feature type="binding site" evidence="1">
    <location>
        <position position="78"/>
    </location>
    <ligand>
        <name>Zn(2+)</name>
        <dbReference type="ChEBI" id="CHEBI:29105"/>
        <label>1</label>
    </ligand>
</feature>
<feature type="binding site" evidence="1">
    <location>
        <position position="449"/>
    </location>
    <ligand>
        <name>Mg(2+)</name>
        <dbReference type="ChEBI" id="CHEBI:18420"/>
    </ligand>
</feature>
<feature type="binding site" evidence="1">
    <location>
        <position position="451"/>
    </location>
    <ligand>
        <name>Mg(2+)</name>
        <dbReference type="ChEBI" id="CHEBI:18420"/>
    </ligand>
</feature>
<feature type="binding site" evidence="1">
    <location>
        <position position="453"/>
    </location>
    <ligand>
        <name>Mg(2+)</name>
        <dbReference type="ChEBI" id="CHEBI:18420"/>
    </ligand>
</feature>
<feature type="binding site" evidence="1">
    <location>
        <position position="794"/>
    </location>
    <ligand>
        <name>Zn(2+)</name>
        <dbReference type="ChEBI" id="CHEBI:29105"/>
        <label>2</label>
    </ligand>
</feature>
<feature type="binding site" evidence="1">
    <location>
        <position position="868"/>
    </location>
    <ligand>
        <name>Zn(2+)</name>
        <dbReference type="ChEBI" id="CHEBI:29105"/>
        <label>2</label>
    </ligand>
</feature>
<feature type="binding site" evidence="1">
    <location>
        <position position="875"/>
    </location>
    <ligand>
        <name>Zn(2+)</name>
        <dbReference type="ChEBI" id="CHEBI:29105"/>
        <label>2</label>
    </ligand>
</feature>
<feature type="binding site" evidence="1">
    <location>
        <position position="878"/>
    </location>
    <ligand>
        <name>Zn(2+)</name>
        <dbReference type="ChEBI" id="CHEBI:29105"/>
        <label>2</label>
    </ligand>
</feature>
<feature type="strand" evidence="2">
    <location>
        <begin position="9"/>
        <end position="14"/>
    </location>
</feature>
<feature type="helix" evidence="2">
    <location>
        <begin position="17"/>
        <end position="23"/>
    </location>
</feature>
<feature type="strand" evidence="2">
    <location>
        <begin position="24"/>
        <end position="27"/>
    </location>
</feature>
<feature type="strand" evidence="2">
    <location>
        <begin position="36"/>
        <end position="38"/>
    </location>
</feature>
<feature type="strand" evidence="2">
    <location>
        <begin position="43"/>
        <end position="45"/>
    </location>
</feature>
<feature type="turn" evidence="2">
    <location>
        <begin position="49"/>
        <end position="51"/>
    </location>
</feature>
<feature type="strand" evidence="2">
    <location>
        <begin position="61"/>
        <end position="64"/>
    </location>
</feature>
<feature type="strand" evidence="2">
    <location>
        <begin position="76"/>
        <end position="78"/>
    </location>
</feature>
<feature type="helix" evidence="2">
    <location>
        <begin position="85"/>
        <end position="89"/>
    </location>
</feature>
<feature type="strand" evidence="2">
    <location>
        <begin position="92"/>
        <end position="102"/>
    </location>
</feature>
<feature type="helix" evidence="2">
    <location>
        <begin position="105"/>
        <end position="108"/>
    </location>
</feature>
<feature type="strand" evidence="2">
    <location>
        <begin position="109"/>
        <end position="111"/>
    </location>
</feature>
<feature type="helix" evidence="2">
    <location>
        <begin position="113"/>
        <end position="117"/>
    </location>
</feature>
<feature type="helix" evidence="2">
    <location>
        <begin position="122"/>
        <end position="129"/>
    </location>
</feature>
<feature type="strand" evidence="2">
    <location>
        <begin position="134"/>
        <end position="137"/>
    </location>
</feature>
<feature type="strand" evidence="3">
    <location>
        <begin position="141"/>
        <end position="143"/>
    </location>
</feature>
<feature type="helix" evidence="2">
    <location>
        <begin position="152"/>
        <end position="161"/>
    </location>
</feature>
<feature type="strand" evidence="2">
    <location>
        <begin position="164"/>
        <end position="166"/>
    </location>
</feature>
<feature type="helix" evidence="2">
    <location>
        <begin position="172"/>
        <end position="180"/>
    </location>
</feature>
<feature type="helix" evidence="2">
    <location>
        <begin position="184"/>
        <end position="195"/>
    </location>
</feature>
<feature type="helix" evidence="2">
    <location>
        <begin position="201"/>
        <end position="217"/>
    </location>
</feature>
<feature type="helix" evidence="2">
    <location>
        <begin position="223"/>
        <end position="226"/>
    </location>
</feature>
<feature type="strand" evidence="2">
    <location>
        <begin position="227"/>
        <end position="233"/>
    </location>
</feature>
<feature type="helix" evidence="2">
    <location>
        <begin position="236"/>
        <end position="238"/>
    </location>
</feature>
<feature type="strand" evidence="2">
    <location>
        <begin position="241"/>
        <end position="243"/>
    </location>
</feature>
<feature type="strand" evidence="2">
    <location>
        <begin position="249"/>
        <end position="251"/>
    </location>
</feature>
<feature type="helix" evidence="2">
    <location>
        <begin position="253"/>
        <end position="272"/>
    </location>
</feature>
<feature type="turn" evidence="2">
    <location>
        <begin position="273"/>
        <end position="275"/>
    </location>
</feature>
<feature type="helix" evidence="2">
    <location>
        <begin position="278"/>
        <end position="296"/>
    </location>
</feature>
<feature type="strand" evidence="2">
    <location>
        <begin position="298"/>
        <end position="303"/>
    </location>
</feature>
<feature type="helix" evidence="2">
    <location>
        <begin position="317"/>
        <end position="319"/>
    </location>
</feature>
<feature type="helix" evidence="2">
    <location>
        <begin position="326"/>
        <end position="329"/>
    </location>
</feature>
<feature type="strand" evidence="2">
    <location>
        <begin position="331"/>
        <end position="346"/>
    </location>
</feature>
<feature type="strand" evidence="2">
    <location>
        <begin position="348"/>
        <end position="350"/>
    </location>
</feature>
<feature type="strand" evidence="2">
    <location>
        <begin position="354"/>
        <end position="358"/>
    </location>
</feature>
<feature type="helix" evidence="2">
    <location>
        <begin position="359"/>
        <end position="365"/>
    </location>
</feature>
<feature type="helix" evidence="2">
    <location>
        <begin position="367"/>
        <end position="375"/>
    </location>
</feature>
<feature type="turn" evidence="2">
    <location>
        <begin position="376"/>
        <end position="378"/>
    </location>
</feature>
<feature type="helix" evidence="2">
    <location>
        <begin position="383"/>
        <end position="391"/>
    </location>
</feature>
<feature type="helix" evidence="2">
    <location>
        <begin position="397"/>
        <end position="404"/>
    </location>
</feature>
<feature type="strand" evidence="2">
    <location>
        <begin position="410"/>
        <end position="416"/>
    </location>
</feature>
<feature type="helix" evidence="2">
    <location>
        <begin position="420"/>
        <end position="422"/>
    </location>
</feature>
<feature type="strand" evidence="2">
    <location>
        <begin position="423"/>
        <end position="438"/>
    </location>
</feature>
<feature type="helix" evidence="3">
    <location>
        <begin position="440"/>
        <end position="442"/>
    </location>
</feature>
<feature type="helix" evidence="2">
    <location>
        <begin position="443"/>
        <end position="446"/>
    </location>
</feature>
<feature type="strand" evidence="2">
    <location>
        <begin position="450"/>
        <end position="452"/>
    </location>
</feature>
<feature type="strand" evidence="2">
    <location>
        <begin position="454"/>
        <end position="458"/>
    </location>
</feature>
<feature type="helix" evidence="2">
    <location>
        <begin position="463"/>
        <end position="471"/>
    </location>
</feature>
<feature type="helix" evidence="2">
    <location>
        <begin position="475"/>
        <end position="477"/>
    </location>
</feature>
<feature type="turn" evidence="2">
    <location>
        <begin position="482"/>
        <end position="484"/>
    </location>
</feature>
<feature type="helix" evidence="2">
    <location>
        <begin position="494"/>
        <end position="503"/>
    </location>
</feature>
<feature type="turn" evidence="2">
    <location>
        <begin position="510"/>
        <end position="513"/>
    </location>
</feature>
<feature type="strand" evidence="2">
    <location>
        <begin position="515"/>
        <end position="518"/>
    </location>
</feature>
<feature type="helix" evidence="2">
    <location>
        <begin position="519"/>
        <end position="527"/>
    </location>
</feature>
<feature type="strand" evidence="2">
    <location>
        <begin position="535"/>
        <end position="545"/>
    </location>
</feature>
<feature type="strand" evidence="2">
    <location>
        <begin position="548"/>
        <end position="557"/>
    </location>
</feature>
<feature type="helix" evidence="2">
    <location>
        <begin position="558"/>
        <end position="563"/>
    </location>
</feature>
<feature type="turn" evidence="2">
    <location>
        <begin position="564"/>
        <end position="566"/>
    </location>
</feature>
<feature type="strand" evidence="2">
    <location>
        <begin position="571"/>
        <end position="574"/>
    </location>
</feature>
<feature type="strand" evidence="3">
    <location>
        <begin position="581"/>
        <end position="583"/>
    </location>
</feature>
<feature type="helix" evidence="2">
    <location>
        <begin position="594"/>
        <end position="606"/>
    </location>
</feature>
<feature type="helix" evidence="2">
    <location>
        <begin position="611"/>
        <end position="630"/>
    </location>
</feature>
<feature type="helix" evidence="2">
    <location>
        <begin position="636"/>
        <end position="638"/>
    </location>
</feature>
<feature type="helix" evidence="2">
    <location>
        <begin position="645"/>
        <end position="661"/>
    </location>
</feature>
<feature type="turn" evidence="2">
    <location>
        <begin position="662"/>
        <end position="667"/>
    </location>
</feature>
<feature type="helix" evidence="2">
    <location>
        <begin position="670"/>
        <end position="694"/>
    </location>
</feature>
<feature type="helix" evidence="2">
    <location>
        <begin position="701"/>
        <end position="707"/>
    </location>
</feature>
<feature type="strand" evidence="2">
    <location>
        <begin position="709"/>
        <end position="711"/>
    </location>
</feature>
<feature type="helix" evidence="2">
    <location>
        <begin position="714"/>
        <end position="716"/>
    </location>
</feature>
<feature type="turn" evidence="2">
    <location>
        <begin position="717"/>
        <end position="720"/>
    </location>
</feature>
<feature type="turn" evidence="2">
    <location>
        <begin position="743"/>
        <end position="745"/>
    </location>
</feature>
<feature type="helix" evidence="2">
    <location>
        <begin position="749"/>
        <end position="754"/>
    </location>
</feature>
<feature type="helix" evidence="2">
    <location>
        <begin position="756"/>
        <end position="783"/>
    </location>
</feature>
<feature type="strand" evidence="2">
    <location>
        <begin position="784"/>
        <end position="786"/>
    </location>
</feature>
<feature type="strand" evidence="2">
    <location>
        <begin position="788"/>
        <end position="792"/>
    </location>
</feature>
<feature type="strand" evidence="2">
    <location>
        <begin position="800"/>
        <end position="802"/>
    </location>
</feature>
<feature type="strand" evidence="2">
    <location>
        <begin position="805"/>
        <end position="813"/>
    </location>
</feature>
<feature type="helix" evidence="2">
    <location>
        <begin position="816"/>
        <end position="819"/>
    </location>
</feature>
<feature type="strand" evidence="2">
    <location>
        <begin position="824"/>
        <end position="826"/>
    </location>
</feature>
<feature type="strand" evidence="2">
    <location>
        <begin position="831"/>
        <end position="833"/>
    </location>
</feature>
<feature type="strand" evidence="2">
    <location>
        <begin position="836"/>
        <end position="838"/>
    </location>
</feature>
<feature type="helix" evidence="2">
    <location>
        <begin position="846"/>
        <end position="855"/>
    </location>
</feature>
<feature type="strand" evidence="2">
    <location>
        <begin position="860"/>
        <end position="862"/>
    </location>
</feature>
<feature type="helix" evidence="2">
    <location>
        <begin position="865"/>
        <end position="867"/>
    </location>
</feature>
<feature type="strand" evidence="2">
    <location>
        <begin position="871"/>
        <end position="875"/>
    </location>
</feature>
<feature type="helix" evidence="2">
    <location>
        <begin position="876"/>
        <end position="879"/>
    </location>
</feature>
<feature type="turn" evidence="2">
    <location>
        <begin position="883"/>
        <end position="885"/>
    </location>
</feature>
<feature type="strand" evidence="2">
    <location>
        <begin position="886"/>
        <end position="888"/>
    </location>
</feature>
<feature type="helix" evidence="2">
    <location>
        <begin position="897"/>
        <end position="904"/>
    </location>
</feature>
<feature type="helix" evidence="2">
    <location>
        <begin position="905"/>
        <end position="909"/>
    </location>
</feature>
<feature type="helix" evidence="2">
    <location>
        <begin position="929"/>
        <end position="937"/>
    </location>
</feature>
<feature type="strand" evidence="2">
    <location>
        <begin position="942"/>
        <end position="945"/>
    </location>
</feature>
<feature type="strand" evidence="2">
    <location>
        <begin position="954"/>
        <end position="958"/>
    </location>
</feature>
<feature type="strand" evidence="2">
    <location>
        <begin position="960"/>
        <end position="963"/>
    </location>
</feature>
<feature type="strand" evidence="2">
    <location>
        <begin position="965"/>
        <end position="972"/>
    </location>
</feature>
<feature type="strand" evidence="2">
    <location>
        <begin position="974"/>
        <end position="978"/>
    </location>
</feature>
<feature type="strand" evidence="2">
    <location>
        <begin position="998"/>
        <end position="1004"/>
    </location>
</feature>
<feature type="helix" evidence="2">
    <location>
        <begin position="1006"/>
        <end position="1031"/>
    </location>
</feature>
<feature type="turn" evidence="2">
    <location>
        <begin position="1032"/>
        <end position="1034"/>
    </location>
</feature>
<feature type="helix" evidence="2">
    <location>
        <begin position="1039"/>
        <end position="1048"/>
    </location>
</feature>
<feature type="strand" evidence="2">
    <location>
        <begin position="1052"/>
        <end position="1057"/>
    </location>
</feature>
<feature type="strand" evidence="2">
    <location>
        <begin position="1068"/>
        <end position="1070"/>
    </location>
</feature>
<feature type="helix" evidence="2">
    <location>
        <begin position="1071"/>
        <end position="1084"/>
    </location>
</feature>
<feature type="strand" evidence="2">
    <location>
        <begin position="1090"/>
        <end position="1094"/>
    </location>
</feature>
<feature type="turn" evidence="2">
    <location>
        <begin position="1098"/>
        <end position="1104"/>
    </location>
</feature>
<feature type="helix" evidence="2">
    <location>
        <begin position="1108"/>
        <end position="1114"/>
    </location>
</feature>
<feature type="helix" evidence="2">
    <location>
        <begin position="1118"/>
        <end position="1127"/>
    </location>
</feature>
<feature type="strand" evidence="2">
    <location>
        <begin position="1130"/>
        <end position="1132"/>
    </location>
</feature>
<feature type="helix" evidence="2">
    <location>
        <begin position="1137"/>
        <end position="1142"/>
    </location>
</feature>
<feature type="helix" evidence="2">
    <location>
        <begin position="1149"/>
        <end position="1151"/>
    </location>
</feature>
<feature type="helix" evidence="2">
    <location>
        <begin position="1153"/>
        <end position="1156"/>
    </location>
</feature>